<gene>
    <name type="primary">CFDP2</name>
    <name type="synonym">BCNT</name>
</gene>
<organism>
    <name type="scientific">Tragulus javanicus</name>
    <name type="common">Lesser Malay chevrotain</name>
    <name type="synonym">Lesser mouse deer</name>
    <dbReference type="NCBI Taxonomy" id="9849"/>
    <lineage>
        <taxon>Eukaryota</taxon>
        <taxon>Metazoa</taxon>
        <taxon>Chordata</taxon>
        <taxon>Craniata</taxon>
        <taxon>Vertebrata</taxon>
        <taxon>Euteleostomi</taxon>
        <taxon>Mammalia</taxon>
        <taxon>Eutheria</taxon>
        <taxon>Laurasiatheria</taxon>
        <taxon>Artiodactyla</taxon>
        <taxon>Ruminantia</taxon>
        <taxon>Tragulina</taxon>
        <taxon>Tragulidae</taxon>
        <taxon>Tragulus</taxon>
    </lineage>
</organism>
<protein>
    <recommendedName>
        <fullName>Craniofacial development protein 2</fullName>
    </recommendedName>
    <alternativeName>
        <fullName>p97 bucentaur protein</fullName>
    </alternativeName>
</protein>
<name>CFDP2_TRAJA</name>
<accession>Q588U8</accession>
<accession>Q60FC8</accession>
<accession>Q75S81</accession>
<dbReference type="EMBL" id="AB191483">
    <property type="protein sequence ID" value="BAD52447.1"/>
    <property type="molecule type" value="Genomic_DNA"/>
</dbReference>
<dbReference type="EMBL" id="AB192410">
    <property type="protein sequence ID" value="BAD93708.1"/>
    <property type="molecule type" value="Genomic_DNA"/>
</dbReference>
<dbReference type="EMBL" id="AB158226">
    <property type="protein sequence ID" value="BAD06249.1"/>
    <property type="molecule type" value="mRNA"/>
</dbReference>
<dbReference type="SMR" id="Q588U8"/>
<dbReference type="GO" id="GO:0005737">
    <property type="term" value="C:cytoplasm"/>
    <property type="evidence" value="ECO:0007669"/>
    <property type="project" value="UniProtKB-SubCell"/>
</dbReference>
<dbReference type="GO" id="GO:0005634">
    <property type="term" value="C:nucleus"/>
    <property type="evidence" value="ECO:0007669"/>
    <property type="project" value="UniProtKB-SubCell"/>
</dbReference>
<dbReference type="GO" id="GO:0003824">
    <property type="term" value="F:catalytic activity"/>
    <property type="evidence" value="ECO:0007669"/>
    <property type="project" value="InterPro"/>
</dbReference>
<dbReference type="CDD" id="cd09076">
    <property type="entry name" value="L1-EN"/>
    <property type="match status" value="1"/>
</dbReference>
<dbReference type="Gene3D" id="3.60.10.10">
    <property type="entry name" value="Endonuclease/exonuclease/phosphatase"/>
    <property type="match status" value="1"/>
</dbReference>
<dbReference type="InterPro" id="IPR036691">
    <property type="entry name" value="Endo/exonu/phosph_ase_sf"/>
</dbReference>
<dbReference type="InterPro" id="IPR005135">
    <property type="entry name" value="Endo/exonuclease/phosphatase"/>
</dbReference>
<dbReference type="InterPro" id="IPR027124">
    <property type="entry name" value="Swc5/CFDP1/2"/>
</dbReference>
<dbReference type="PANTHER" id="PTHR23227">
    <property type="entry name" value="BUCENTAUR RELATED"/>
    <property type="match status" value="1"/>
</dbReference>
<dbReference type="PANTHER" id="PTHR23227:SF85">
    <property type="entry name" value="CRANIOFACIAL DEVELOPMENT PROTEIN 2"/>
    <property type="match status" value="1"/>
</dbReference>
<dbReference type="Pfam" id="PF03372">
    <property type="entry name" value="Exo_endo_phos"/>
    <property type="match status" value="1"/>
</dbReference>
<dbReference type="SUPFAM" id="SSF56219">
    <property type="entry name" value="DNase I-like"/>
    <property type="match status" value="1"/>
</dbReference>
<reference key="1">
    <citation type="submission" date="2003-12" db="EMBL/GenBank/DDBJ databases">
        <title>Gene organization of the chevrotain bcnt whose paralogue in ruminantia includes an endonuclease domain of RTE-1 in the protein.</title>
        <authorList>
            <person name="Ueno S."/>
            <person name="Kimura J."/>
            <person name="Kurohmaru M."/>
            <person name="Fukuta K."/>
            <person name="Iwashita S."/>
        </authorList>
    </citation>
    <scope>NUCLEOTIDE SEQUENCE [GENOMIC DNA]</scope>
    <source>
        <tissue>Liver</tissue>
    </source>
</reference>
<reference key="2">
    <citation type="submission" date="2004-10" db="EMBL/GenBank/DDBJ databases">
        <title>The diversification of the paralogous Bcnt gene in ruminants was accompanied by the recruitment of an endonuclease domain from a retrotransposable element-1.</title>
        <authorList>
            <person name="Ueno S."/>
            <person name="Nakashima K."/>
            <person name="Osada N."/>
            <person name="Kubo Y."/>
            <person name="Ohshima K."/>
            <person name="Tanaka K."/>
            <person name="Endo H."/>
            <person name="Kimura J."/>
            <person name="Kurohmaru M."/>
            <person name="Fukuta K."/>
            <person name="David L."/>
            <person name="Iwashita S."/>
        </authorList>
    </citation>
    <scope>NUCLEOTIDE SEQUENCE [MRNA]</scope>
    <source>
        <tissue>Muscle</tissue>
    </source>
</reference>
<keyword id="KW-0963">Cytoplasm</keyword>
<keyword id="KW-0539">Nucleus</keyword>
<evidence type="ECO:0000250" key="1"/>
<evidence type="ECO:0000256" key="2">
    <source>
        <dbReference type="SAM" id="MobiDB-lite"/>
    </source>
</evidence>
<evidence type="ECO:0000305" key="3"/>
<sequence length="574" mass="63428">MEEVDSKDISSSKAEDCVPSGGECHEEAVDELMKEDEVGGEEETEQTKGIKRKAESILPRKNKQGRLSLEQEDEEDANKESGGGGSEKEDAATEQEKGVESEDARKKKEDEVLASSVNDAEPESKVPPSTPAKTGEETEETRSGEEQEKPKEMQEVKLTKSLVEEVRCDRQQGRSSGMTPEDEPPRSESSPCAPGQVKKTGTNASSKNEPAGAKWKGQPAVDASSDESKLRCCKEEYCIGTWNVRSMNPGKLDVVKQEMDRINIDILGISELKWTGMGELNSDDHYIYYCGQQSLRRNGVALIVNKRVQNAIIGCNLKNDRMISLRFQGKPFNLTVIQVFAPTPYAEEGEVYRFYEDLQHLLEITPKIDVLFIIGDWNAKVGSQEIPGITGRFGLGMQNEAGRRLIDFCHHNRLVIANTLFQQPSRRLYTWTSPDGRFRDQIDYIICRQRWRSSVQSAKTRPGADCGSDHKLLIAKFRLKLKIIPKTTRPFRGTNEADDTSEESKPSSEQKGKEKPQASVPSAVSSVPGGSGVTKEVGATSQEAKSVVKQNEKEEPQANVLSAVPSLPAGSGVF</sequence>
<proteinExistence type="evidence at transcript level"/>
<comment type="subcellular location">
    <subcellularLocation>
        <location evidence="1">Cytoplasm</location>
    </subcellularLocation>
    <subcellularLocation>
        <location evidence="1">Nucleus</location>
    </subcellularLocation>
</comment>
<comment type="miscellaneous">
    <text>Gene duplication of the ancestral BCNT gene leads to the h-type BCNT (CFDP1) gene and the p97BCNT (CFDP2) gene. The latter contains a region derived from the endonuclease domain of a retrotransposable element RTE-1. This repetitive sequence associated with the BCNT gene is specific to Ruminantia.</text>
</comment>
<feature type="chain" id="PRO_0000212499" description="Craniofacial development protein 2">
    <location>
        <begin position="1"/>
        <end position="574"/>
    </location>
</feature>
<feature type="region of interest" description="Disordered" evidence="2">
    <location>
        <begin position="1"/>
        <end position="222"/>
    </location>
</feature>
<feature type="region of interest" description="Disordered" evidence="2">
    <location>
        <begin position="488"/>
        <end position="574"/>
    </location>
</feature>
<feature type="region of interest" description="Hydrophilic">
    <location>
        <begin position="493"/>
        <end position="572"/>
    </location>
</feature>
<feature type="compositionally biased region" description="Basic and acidic residues" evidence="2">
    <location>
        <begin position="1"/>
        <end position="16"/>
    </location>
</feature>
<feature type="compositionally biased region" description="Basic and acidic residues" evidence="2">
    <location>
        <begin position="23"/>
        <end position="37"/>
    </location>
</feature>
<feature type="compositionally biased region" description="Basic and acidic residues" evidence="2">
    <location>
        <begin position="45"/>
        <end position="55"/>
    </location>
</feature>
<feature type="compositionally biased region" description="Basic and acidic residues" evidence="2">
    <location>
        <begin position="86"/>
        <end position="111"/>
    </location>
</feature>
<feature type="compositionally biased region" description="Basic and acidic residues" evidence="2">
    <location>
        <begin position="134"/>
        <end position="172"/>
    </location>
</feature>
<feature type="compositionally biased region" description="Polar residues" evidence="2">
    <location>
        <begin position="199"/>
        <end position="208"/>
    </location>
</feature>
<feature type="compositionally biased region" description="Basic and acidic residues" evidence="2">
    <location>
        <begin position="502"/>
        <end position="516"/>
    </location>
</feature>
<feature type="compositionally biased region" description="Low complexity" evidence="2">
    <location>
        <begin position="518"/>
        <end position="528"/>
    </location>
</feature>
<feature type="sequence conflict" description="In Ref. 1; BAD06249." evidence="3" ref="1">
    <original>E</original>
    <variation>K</variation>
    <location>
        <position position="137"/>
    </location>
</feature>